<feature type="chain" id="PRO_1000165491" description="Small ribosomal subunit protein uS3">
    <location>
        <begin position="1"/>
        <end position="241"/>
    </location>
</feature>
<feature type="domain" description="KH type-2" evidence="1">
    <location>
        <begin position="39"/>
        <end position="109"/>
    </location>
</feature>
<feature type="region of interest" description="Disordered" evidence="2">
    <location>
        <begin position="215"/>
        <end position="241"/>
    </location>
</feature>
<feature type="compositionally biased region" description="Basic and acidic residues" evidence="2">
    <location>
        <begin position="232"/>
        <end position="241"/>
    </location>
</feature>
<evidence type="ECO:0000255" key="1">
    <source>
        <dbReference type="HAMAP-Rule" id="MF_01309"/>
    </source>
</evidence>
<evidence type="ECO:0000256" key="2">
    <source>
        <dbReference type="SAM" id="MobiDB-lite"/>
    </source>
</evidence>
<evidence type="ECO:0000305" key="3"/>
<gene>
    <name evidence="1" type="primary">rpsC</name>
    <name evidence="1" type="synonym">rps3</name>
    <name type="ordered locus">cce_4020</name>
</gene>
<name>RS3_CROS5</name>
<protein>
    <recommendedName>
        <fullName evidence="1">Small ribosomal subunit protein uS3</fullName>
    </recommendedName>
    <alternativeName>
        <fullName evidence="3">30S ribosomal protein S3</fullName>
    </alternativeName>
</protein>
<keyword id="KW-1185">Reference proteome</keyword>
<keyword id="KW-0687">Ribonucleoprotein</keyword>
<keyword id="KW-0689">Ribosomal protein</keyword>
<keyword id="KW-0694">RNA-binding</keyword>
<keyword id="KW-0699">rRNA-binding</keyword>
<organism>
    <name type="scientific">Crocosphaera subtropica (strain ATCC 51142 / BH68)</name>
    <name type="common">Cyanothece sp. (strain ATCC 51142)</name>
    <dbReference type="NCBI Taxonomy" id="43989"/>
    <lineage>
        <taxon>Bacteria</taxon>
        <taxon>Bacillati</taxon>
        <taxon>Cyanobacteriota</taxon>
        <taxon>Cyanophyceae</taxon>
        <taxon>Oscillatoriophycideae</taxon>
        <taxon>Chroococcales</taxon>
        <taxon>Aphanothecaceae</taxon>
        <taxon>Crocosphaera</taxon>
        <taxon>Crocosphaera subtropica</taxon>
    </lineage>
</organism>
<dbReference type="EMBL" id="CP000806">
    <property type="protein sequence ID" value="ACB53368.1"/>
    <property type="molecule type" value="Genomic_DNA"/>
</dbReference>
<dbReference type="RefSeq" id="WP_009543890.1">
    <property type="nucleotide sequence ID" value="NC_010546.1"/>
</dbReference>
<dbReference type="SMR" id="B1WQR6"/>
<dbReference type="STRING" id="43989.cce_4020"/>
<dbReference type="KEGG" id="cyt:cce_4020"/>
<dbReference type="eggNOG" id="COG0092">
    <property type="taxonomic scope" value="Bacteria"/>
</dbReference>
<dbReference type="HOGENOM" id="CLU_058591_0_2_3"/>
<dbReference type="OrthoDB" id="9806396at2"/>
<dbReference type="Proteomes" id="UP000001203">
    <property type="component" value="Chromosome circular"/>
</dbReference>
<dbReference type="GO" id="GO:0022627">
    <property type="term" value="C:cytosolic small ribosomal subunit"/>
    <property type="evidence" value="ECO:0007669"/>
    <property type="project" value="TreeGrafter"/>
</dbReference>
<dbReference type="GO" id="GO:0003729">
    <property type="term" value="F:mRNA binding"/>
    <property type="evidence" value="ECO:0007669"/>
    <property type="project" value="UniProtKB-UniRule"/>
</dbReference>
<dbReference type="GO" id="GO:0019843">
    <property type="term" value="F:rRNA binding"/>
    <property type="evidence" value="ECO:0007669"/>
    <property type="project" value="UniProtKB-UniRule"/>
</dbReference>
<dbReference type="GO" id="GO:0003735">
    <property type="term" value="F:structural constituent of ribosome"/>
    <property type="evidence" value="ECO:0007669"/>
    <property type="project" value="InterPro"/>
</dbReference>
<dbReference type="GO" id="GO:0006412">
    <property type="term" value="P:translation"/>
    <property type="evidence" value="ECO:0007669"/>
    <property type="project" value="UniProtKB-UniRule"/>
</dbReference>
<dbReference type="CDD" id="cd02412">
    <property type="entry name" value="KH-II_30S_S3"/>
    <property type="match status" value="1"/>
</dbReference>
<dbReference type="FunFam" id="3.30.300.20:FF:000001">
    <property type="entry name" value="30S ribosomal protein S3"/>
    <property type="match status" value="1"/>
</dbReference>
<dbReference type="Gene3D" id="3.30.300.20">
    <property type="match status" value="1"/>
</dbReference>
<dbReference type="Gene3D" id="3.30.1140.32">
    <property type="entry name" value="Ribosomal protein S3, C-terminal domain"/>
    <property type="match status" value="1"/>
</dbReference>
<dbReference type="HAMAP" id="MF_01309_B">
    <property type="entry name" value="Ribosomal_uS3_B"/>
    <property type="match status" value="1"/>
</dbReference>
<dbReference type="InterPro" id="IPR004087">
    <property type="entry name" value="KH_dom"/>
</dbReference>
<dbReference type="InterPro" id="IPR015946">
    <property type="entry name" value="KH_dom-like_a/b"/>
</dbReference>
<dbReference type="InterPro" id="IPR004044">
    <property type="entry name" value="KH_dom_type_2"/>
</dbReference>
<dbReference type="InterPro" id="IPR009019">
    <property type="entry name" value="KH_sf_prok-type"/>
</dbReference>
<dbReference type="InterPro" id="IPR036419">
    <property type="entry name" value="Ribosomal_S3_C_sf"/>
</dbReference>
<dbReference type="InterPro" id="IPR005704">
    <property type="entry name" value="Ribosomal_uS3_bac-typ"/>
</dbReference>
<dbReference type="InterPro" id="IPR001351">
    <property type="entry name" value="Ribosomal_uS3_C"/>
</dbReference>
<dbReference type="InterPro" id="IPR018280">
    <property type="entry name" value="Ribosomal_uS3_CS"/>
</dbReference>
<dbReference type="NCBIfam" id="TIGR01009">
    <property type="entry name" value="rpsC_bact"/>
    <property type="match status" value="1"/>
</dbReference>
<dbReference type="PANTHER" id="PTHR11760">
    <property type="entry name" value="30S/40S RIBOSOMAL PROTEIN S3"/>
    <property type="match status" value="1"/>
</dbReference>
<dbReference type="PANTHER" id="PTHR11760:SF19">
    <property type="entry name" value="SMALL RIBOSOMAL SUBUNIT PROTEIN US3C"/>
    <property type="match status" value="1"/>
</dbReference>
<dbReference type="Pfam" id="PF07650">
    <property type="entry name" value="KH_2"/>
    <property type="match status" value="1"/>
</dbReference>
<dbReference type="Pfam" id="PF00189">
    <property type="entry name" value="Ribosomal_S3_C"/>
    <property type="match status" value="1"/>
</dbReference>
<dbReference type="SMART" id="SM00322">
    <property type="entry name" value="KH"/>
    <property type="match status" value="1"/>
</dbReference>
<dbReference type="SUPFAM" id="SSF54814">
    <property type="entry name" value="Prokaryotic type KH domain (KH-domain type II)"/>
    <property type="match status" value="1"/>
</dbReference>
<dbReference type="SUPFAM" id="SSF54821">
    <property type="entry name" value="Ribosomal protein S3 C-terminal domain"/>
    <property type="match status" value="1"/>
</dbReference>
<dbReference type="PROSITE" id="PS50823">
    <property type="entry name" value="KH_TYPE_2"/>
    <property type="match status" value="1"/>
</dbReference>
<dbReference type="PROSITE" id="PS00548">
    <property type="entry name" value="RIBOSOMAL_S3"/>
    <property type="match status" value="1"/>
</dbReference>
<reference key="1">
    <citation type="journal article" date="2008" name="Proc. Natl. Acad. Sci. U.S.A.">
        <title>The genome of Cyanothece 51142, a unicellular diazotrophic cyanobacterium important in the marine nitrogen cycle.</title>
        <authorList>
            <person name="Welsh E.A."/>
            <person name="Liberton M."/>
            <person name="Stoeckel J."/>
            <person name="Loh T."/>
            <person name="Elvitigala T."/>
            <person name="Wang C."/>
            <person name="Wollam A."/>
            <person name="Fulton R.S."/>
            <person name="Clifton S.W."/>
            <person name="Jacobs J.M."/>
            <person name="Aurora R."/>
            <person name="Ghosh B.K."/>
            <person name="Sherman L.A."/>
            <person name="Smith R.D."/>
            <person name="Wilson R.K."/>
            <person name="Pakrasi H.B."/>
        </authorList>
    </citation>
    <scope>NUCLEOTIDE SEQUENCE [LARGE SCALE GENOMIC DNA]</scope>
    <source>
        <strain>ATCC 51142 / BH68</strain>
    </source>
</reference>
<comment type="function">
    <text evidence="1">Binds the lower part of the 30S subunit head. Binds mRNA in the 70S ribosome, positioning it for translation.</text>
</comment>
<comment type="subunit">
    <text evidence="1">Part of the 30S ribosomal subunit. Forms a tight complex with proteins S10 and S14.</text>
</comment>
<comment type="similarity">
    <text evidence="1">Belongs to the universal ribosomal protein uS3 family.</text>
</comment>
<proteinExistence type="inferred from homology"/>
<sequence>MGQKIHPIGFRLGVTKEHKSCWYADKRRYPELLQEDLAIRQHVEKNLSNAGIADIRIERKADQIDLAIHTARPGVVVGRGGSGIEQLRTGLQQTLGENRQIRINVIEVSRVDADAALIAEYITQQLERRVSFRRVVRQAIQRAQRAEVKGIKIQVGGRLNGAEIARTEWVREGRVPLHTLRADIDYAYRTAQTIYGILGVKVWVFKGEIIPGQDEQAMAAPAPTPRKKRRPQQFEDRSNEE</sequence>
<accession>B1WQR6</accession>